<organismHost>
    <name type="scientific">Chrysanthemum morifolium</name>
    <name type="common">Florist's daisy</name>
    <name type="synonym">Dendranthema grandiflorum</name>
    <dbReference type="NCBI Taxonomy" id="41568"/>
</organismHost>
<organismHost>
    <name type="scientific">Gynura</name>
    <dbReference type="NCBI Taxonomy" id="109564"/>
</organismHost>
<sequence length="315" mass="34639">MPPKPAPGDNEGNASGSTPTPPPPPPARTAEEARLRLAEMEREREQEQLLEEMNSNTPAEDARNISRLTQLAALLRREQTNVHVTNMALEIGRPALQPPPNMRGDPTNMYSQVSSDFLWKIKPQRISNNMATSEDMVKIQVALEGLGVPTESVKEVIIRLVLNCANTSSSVYQDPKGVIEWDGGAIIADDVVGVITKHSTLRKVCRLYAAVAWNYMHLQQTPPSDWSAMGFHPNVKYAAFDFFDYVENGAAIRPSGGIVPKPTRAEYVAYNTYKMLALNKANNNDTFGNFDSAITGGRQGPAIHNNLNNANNKTL</sequence>
<name>CAPSD_CVB</name>
<reference key="1">
    <citation type="journal article" date="1991" name="J. Gen. Virol.">
        <title>Nucleotide sequence and gene organization of the 3'-terminal region of chrysanthemum virus B genomic RNA.</title>
        <authorList>
            <person name="Levay K."/>
            <person name="Zavriev S."/>
        </authorList>
    </citation>
    <scope>NUCLEOTIDE SEQUENCE [GENOMIC RNA]</scope>
</reference>
<reference key="2">
    <citation type="journal article" date="2005" name="Mol. Plant Microbe Interact.">
        <title>A new cell-to-cell transport model for Potexviruses.</title>
        <authorList>
            <person name="Verchot-Lubicz J."/>
        </authorList>
    </citation>
    <scope>REVIEW</scope>
</reference>
<feature type="chain" id="PRO_0000222636" description="Capsid protein">
    <location>
        <begin position="1"/>
        <end position="315"/>
    </location>
</feature>
<feature type="region of interest" description="Disordered" evidence="1">
    <location>
        <begin position="1"/>
        <end position="60"/>
    </location>
</feature>
<feature type="compositionally biased region" description="Basic and acidic residues" evidence="1">
    <location>
        <begin position="29"/>
        <end position="47"/>
    </location>
</feature>
<evidence type="ECO:0000256" key="1">
    <source>
        <dbReference type="SAM" id="MobiDB-lite"/>
    </source>
</evidence>
<evidence type="ECO:0000305" key="2"/>
<dbReference type="EMBL" id="S60150">
    <property type="protein sequence ID" value="AAB20080.1"/>
    <property type="molecule type" value="Genomic_RNA"/>
</dbReference>
<dbReference type="PIR" id="JQ1250">
    <property type="entry name" value="JQ1250"/>
</dbReference>
<dbReference type="SMR" id="P37991"/>
<dbReference type="GO" id="GO:0019029">
    <property type="term" value="C:helical viral capsid"/>
    <property type="evidence" value="ECO:0007669"/>
    <property type="project" value="UniProtKB-KW"/>
</dbReference>
<dbReference type="GO" id="GO:1990904">
    <property type="term" value="C:ribonucleoprotein complex"/>
    <property type="evidence" value="ECO:0007669"/>
    <property type="project" value="UniProtKB-KW"/>
</dbReference>
<dbReference type="GO" id="GO:0005198">
    <property type="term" value="F:structural molecule activity"/>
    <property type="evidence" value="ECO:0007669"/>
    <property type="project" value="InterPro"/>
</dbReference>
<dbReference type="InterPro" id="IPR013569">
    <property type="entry name" value="Carlavirus_coat_N"/>
</dbReference>
<dbReference type="InterPro" id="IPR000052">
    <property type="entry name" value="Pltvir_coat"/>
</dbReference>
<dbReference type="Pfam" id="PF00286">
    <property type="entry name" value="Flexi_CP"/>
    <property type="match status" value="1"/>
</dbReference>
<dbReference type="Pfam" id="PF08358">
    <property type="entry name" value="Flexi_CP_N"/>
    <property type="match status" value="1"/>
</dbReference>
<dbReference type="PRINTS" id="PR00232">
    <property type="entry name" value="POTXCARLCOAT"/>
</dbReference>
<dbReference type="PROSITE" id="PS00418">
    <property type="entry name" value="POTEX_CARLAVIRUS_COAT"/>
    <property type="match status" value="1"/>
</dbReference>
<comment type="function">
    <text>Required for genome encapsidation. Forms ribonucleoprotein complexes along with TGB1 helicase and viral RNA.</text>
</comment>
<comment type="subcellular location">
    <subcellularLocation>
        <location evidence="2">Virion</location>
    </subcellularLocation>
</comment>
<comment type="similarity">
    <text evidence="2">Belongs to the potexviruses coat protein family.</text>
</comment>
<organism>
    <name type="scientific">Chrysanthemum virus B</name>
    <name type="common">CVB</name>
    <dbReference type="NCBI Taxonomy" id="12165"/>
    <lineage>
        <taxon>Viruses</taxon>
        <taxon>Riboviria</taxon>
        <taxon>Orthornavirae</taxon>
        <taxon>Kitrinoviricota</taxon>
        <taxon>Alsuviricetes</taxon>
        <taxon>Tymovirales</taxon>
        <taxon>Betaflexiviridae</taxon>
        <taxon>Quinvirinae</taxon>
        <taxon>Carlavirus</taxon>
    </lineage>
</organism>
<protein>
    <recommendedName>
        <fullName>Capsid protein</fullName>
    </recommendedName>
    <alternativeName>
        <fullName>Coat protein</fullName>
        <shortName>CP</shortName>
    </alternativeName>
</protein>
<keyword id="KW-0167">Capsid protein</keyword>
<keyword id="KW-1139">Helical capsid protein</keyword>
<keyword id="KW-0687">Ribonucleoprotein</keyword>
<keyword id="KW-0946">Virion</keyword>
<proteinExistence type="inferred from homology"/>
<accession>P37991</accession>